<reference key="1">
    <citation type="journal article" date="2003" name="Proc. Natl. Acad. Sci. U.S.A.">
        <title>The complete genome sequence of the Arabidopsis and tomato pathogen Pseudomonas syringae pv. tomato DC3000.</title>
        <authorList>
            <person name="Buell C.R."/>
            <person name="Joardar V."/>
            <person name="Lindeberg M."/>
            <person name="Selengut J."/>
            <person name="Paulsen I.T."/>
            <person name="Gwinn M.L."/>
            <person name="Dodson R.J."/>
            <person name="DeBoy R.T."/>
            <person name="Durkin A.S."/>
            <person name="Kolonay J.F."/>
            <person name="Madupu R."/>
            <person name="Daugherty S.C."/>
            <person name="Brinkac L.M."/>
            <person name="Beanan M.J."/>
            <person name="Haft D.H."/>
            <person name="Nelson W.C."/>
            <person name="Davidsen T.M."/>
            <person name="Zafar N."/>
            <person name="Zhou L."/>
            <person name="Liu J."/>
            <person name="Yuan Q."/>
            <person name="Khouri H.M."/>
            <person name="Fedorova N.B."/>
            <person name="Tran B."/>
            <person name="Russell D."/>
            <person name="Berry K.J."/>
            <person name="Utterback T.R."/>
            <person name="Van Aken S.E."/>
            <person name="Feldblyum T.V."/>
            <person name="D'Ascenzo M."/>
            <person name="Deng W.-L."/>
            <person name="Ramos A.R."/>
            <person name="Alfano J.R."/>
            <person name="Cartinhour S."/>
            <person name="Chatterjee A.K."/>
            <person name="Delaney T.P."/>
            <person name="Lazarowitz S.G."/>
            <person name="Martin G.B."/>
            <person name="Schneider D.J."/>
            <person name="Tang X."/>
            <person name="Bender C.L."/>
            <person name="White O."/>
            <person name="Fraser C.M."/>
            <person name="Collmer A."/>
        </authorList>
    </citation>
    <scope>NUCLEOTIDE SEQUENCE [LARGE SCALE GENOMIC DNA]</scope>
    <source>
        <strain>ATCC BAA-871 / DC3000</strain>
    </source>
</reference>
<comment type="function">
    <text evidence="1">Cell wall formation. Catalyzes the addition of glutamate to the nucleotide precursor UDP-N-acetylmuramoyl-L-alanine (UMA).</text>
</comment>
<comment type="catalytic activity">
    <reaction evidence="1">
        <text>UDP-N-acetyl-alpha-D-muramoyl-L-alanine + D-glutamate + ATP = UDP-N-acetyl-alpha-D-muramoyl-L-alanyl-D-glutamate + ADP + phosphate + H(+)</text>
        <dbReference type="Rhea" id="RHEA:16429"/>
        <dbReference type="ChEBI" id="CHEBI:15378"/>
        <dbReference type="ChEBI" id="CHEBI:29986"/>
        <dbReference type="ChEBI" id="CHEBI:30616"/>
        <dbReference type="ChEBI" id="CHEBI:43474"/>
        <dbReference type="ChEBI" id="CHEBI:83898"/>
        <dbReference type="ChEBI" id="CHEBI:83900"/>
        <dbReference type="ChEBI" id="CHEBI:456216"/>
        <dbReference type="EC" id="6.3.2.9"/>
    </reaction>
</comment>
<comment type="pathway">
    <text evidence="1">Cell wall biogenesis; peptidoglycan biosynthesis.</text>
</comment>
<comment type="subcellular location">
    <subcellularLocation>
        <location evidence="1">Cytoplasm</location>
    </subcellularLocation>
</comment>
<comment type="similarity">
    <text evidence="1">Belongs to the MurCDEF family.</text>
</comment>
<accession>Q87WY3</accession>
<proteinExistence type="inferred from homology"/>
<feature type="chain" id="PRO_0000109066" description="UDP-N-acetylmuramoylalanine--D-glutamate ligase">
    <location>
        <begin position="1"/>
        <end position="448"/>
    </location>
</feature>
<feature type="binding site" evidence="1">
    <location>
        <begin position="116"/>
        <end position="122"/>
    </location>
    <ligand>
        <name>ATP</name>
        <dbReference type="ChEBI" id="CHEBI:30616"/>
    </ligand>
</feature>
<dbReference type="EC" id="6.3.2.9" evidence="1"/>
<dbReference type="EMBL" id="AE016853">
    <property type="protein sequence ID" value="AAO57859.1"/>
    <property type="molecule type" value="Genomic_DNA"/>
</dbReference>
<dbReference type="RefSeq" id="NP_794164.1">
    <property type="nucleotide sequence ID" value="NC_004578.1"/>
</dbReference>
<dbReference type="RefSeq" id="WP_005766566.1">
    <property type="nucleotide sequence ID" value="NC_004578.1"/>
</dbReference>
<dbReference type="SMR" id="Q87WY3"/>
<dbReference type="STRING" id="223283.PSPTO_4410"/>
<dbReference type="GeneID" id="1186091"/>
<dbReference type="KEGG" id="pst:PSPTO_4410"/>
<dbReference type="PATRIC" id="fig|223283.9.peg.4525"/>
<dbReference type="eggNOG" id="COG0771">
    <property type="taxonomic scope" value="Bacteria"/>
</dbReference>
<dbReference type="HOGENOM" id="CLU_032540_1_0_6"/>
<dbReference type="OrthoDB" id="9809796at2"/>
<dbReference type="PhylomeDB" id="Q87WY3"/>
<dbReference type="UniPathway" id="UPA00219"/>
<dbReference type="Proteomes" id="UP000002515">
    <property type="component" value="Chromosome"/>
</dbReference>
<dbReference type="GO" id="GO:0005737">
    <property type="term" value="C:cytoplasm"/>
    <property type="evidence" value="ECO:0007669"/>
    <property type="project" value="UniProtKB-SubCell"/>
</dbReference>
<dbReference type="GO" id="GO:0005524">
    <property type="term" value="F:ATP binding"/>
    <property type="evidence" value="ECO:0007669"/>
    <property type="project" value="UniProtKB-UniRule"/>
</dbReference>
<dbReference type="GO" id="GO:0008764">
    <property type="term" value="F:UDP-N-acetylmuramoylalanine-D-glutamate ligase activity"/>
    <property type="evidence" value="ECO:0007669"/>
    <property type="project" value="UniProtKB-UniRule"/>
</dbReference>
<dbReference type="GO" id="GO:0051301">
    <property type="term" value="P:cell division"/>
    <property type="evidence" value="ECO:0007669"/>
    <property type="project" value="UniProtKB-KW"/>
</dbReference>
<dbReference type="GO" id="GO:0071555">
    <property type="term" value="P:cell wall organization"/>
    <property type="evidence" value="ECO:0007669"/>
    <property type="project" value="UniProtKB-KW"/>
</dbReference>
<dbReference type="GO" id="GO:0009252">
    <property type="term" value="P:peptidoglycan biosynthetic process"/>
    <property type="evidence" value="ECO:0007669"/>
    <property type="project" value="UniProtKB-UniRule"/>
</dbReference>
<dbReference type="GO" id="GO:0008360">
    <property type="term" value="P:regulation of cell shape"/>
    <property type="evidence" value="ECO:0007669"/>
    <property type="project" value="UniProtKB-KW"/>
</dbReference>
<dbReference type="Gene3D" id="3.90.190.20">
    <property type="entry name" value="Mur ligase, C-terminal domain"/>
    <property type="match status" value="1"/>
</dbReference>
<dbReference type="Gene3D" id="3.40.1190.10">
    <property type="entry name" value="Mur-like, catalytic domain"/>
    <property type="match status" value="1"/>
</dbReference>
<dbReference type="Gene3D" id="3.40.50.720">
    <property type="entry name" value="NAD(P)-binding Rossmann-like Domain"/>
    <property type="match status" value="1"/>
</dbReference>
<dbReference type="HAMAP" id="MF_00639">
    <property type="entry name" value="MurD"/>
    <property type="match status" value="1"/>
</dbReference>
<dbReference type="InterPro" id="IPR036565">
    <property type="entry name" value="Mur-like_cat_sf"/>
</dbReference>
<dbReference type="InterPro" id="IPR004101">
    <property type="entry name" value="Mur_ligase_C"/>
</dbReference>
<dbReference type="InterPro" id="IPR036615">
    <property type="entry name" value="Mur_ligase_C_dom_sf"/>
</dbReference>
<dbReference type="InterPro" id="IPR013221">
    <property type="entry name" value="Mur_ligase_cen"/>
</dbReference>
<dbReference type="InterPro" id="IPR005762">
    <property type="entry name" value="MurD"/>
</dbReference>
<dbReference type="NCBIfam" id="TIGR01087">
    <property type="entry name" value="murD"/>
    <property type="match status" value="1"/>
</dbReference>
<dbReference type="PANTHER" id="PTHR43692">
    <property type="entry name" value="UDP-N-ACETYLMURAMOYLALANINE--D-GLUTAMATE LIGASE"/>
    <property type="match status" value="1"/>
</dbReference>
<dbReference type="PANTHER" id="PTHR43692:SF1">
    <property type="entry name" value="UDP-N-ACETYLMURAMOYLALANINE--D-GLUTAMATE LIGASE"/>
    <property type="match status" value="1"/>
</dbReference>
<dbReference type="Pfam" id="PF02875">
    <property type="entry name" value="Mur_ligase_C"/>
    <property type="match status" value="1"/>
</dbReference>
<dbReference type="Pfam" id="PF08245">
    <property type="entry name" value="Mur_ligase_M"/>
    <property type="match status" value="1"/>
</dbReference>
<dbReference type="Pfam" id="PF21799">
    <property type="entry name" value="MurD-like_N"/>
    <property type="match status" value="1"/>
</dbReference>
<dbReference type="SUPFAM" id="SSF51984">
    <property type="entry name" value="MurCD N-terminal domain"/>
    <property type="match status" value="1"/>
</dbReference>
<dbReference type="SUPFAM" id="SSF53623">
    <property type="entry name" value="MurD-like peptide ligases, catalytic domain"/>
    <property type="match status" value="1"/>
</dbReference>
<dbReference type="SUPFAM" id="SSF53244">
    <property type="entry name" value="MurD-like peptide ligases, peptide-binding domain"/>
    <property type="match status" value="1"/>
</dbReference>
<keyword id="KW-0067">ATP-binding</keyword>
<keyword id="KW-0131">Cell cycle</keyword>
<keyword id="KW-0132">Cell division</keyword>
<keyword id="KW-0133">Cell shape</keyword>
<keyword id="KW-0961">Cell wall biogenesis/degradation</keyword>
<keyword id="KW-0963">Cytoplasm</keyword>
<keyword id="KW-0436">Ligase</keyword>
<keyword id="KW-0547">Nucleotide-binding</keyword>
<keyword id="KW-0573">Peptidoglycan synthesis</keyword>
<keyword id="KW-1185">Reference proteome</keyword>
<sequence>MSLIVSDRFRIVVGLGKSGMSLVRFLANRGVSFAVADTRENPPELATLRRDYPQVEVRCGELDVDFLCRADELYVSPGLALATPALQQAHARGAKLSGDIELFARYAKAPVIAITGSNAKSTVTTLVGEMAAAAGKRVAVGGNLGTPALDLLSDDVELYVMELSSFQLETTDQLNAEVATVLNISEDHMDRYSGLPAYHLAKHRIFRGARQVVVNRQDALSRPLIGEGLPCWTFGLNKPDFHGFGLREENGEKFLAFQFENLMPVSELKVRGAHNQANALAALALGHAVGLPFDAMLSSLREFTGLEHRCQWLRERNGVDYYNDSKATNVGAALAAIEGLGSDIGGKLVLIAGGDGKGADFSGLRAPVAKYCRAAVLLGRDAELIAQALGDAVPLIRVDTVQAAAERSAELAQRGDAVLLSPACASLDMFKNYEERGRVFAQAVECLS</sequence>
<protein>
    <recommendedName>
        <fullName evidence="1">UDP-N-acetylmuramoylalanine--D-glutamate ligase</fullName>
        <ecNumber evidence="1">6.3.2.9</ecNumber>
    </recommendedName>
    <alternativeName>
        <fullName evidence="1">D-glutamic acid-adding enzyme</fullName>
    </alternativeName>
    <alternativeName>
        <fullName evidence="1">UDP-N-acetylmuramoyl-L-alanyl-D-glutamate synthetase</fullName>
    </alternativeName>
</protein>
<gene>
    <name evidence="1" type="primary">murD</name>
    <name type="ordered locus">PSPTO_4410</name>
</gene>
<name>MURD_PSESM</name>
<evidence type="ECO:0000255" key="1">
    <source>
        <dbReference type="HAMAP-Rule" id="MF_00639"/>
    </source>
</evidence>
<organism>
    <name type="scientific">Pseudomonas syringae pv. tomato (strain ATCC BAA-871 / DC3000)</name>
    <dbReference type="NCBI Taxonomy" id="223283"/>
    <lineage>
        <taxon>Bacteria</taxon>
        <taxon>Pseudomonadati</taxon>
        <taxon>Pseudomonadota</taxon>
        <taxon>Gammaproteobacteria</taxon>
        <taxon>Pseudomonadales</taxon>
        <taxon>Pseudomonadaceae</taxon>
        <taxon>Pseudomonas</taxon>
    </lineage>
</organism>